<organism>
    <name type="scientific">Arabidopsis thaliana</name>
    <name type="common">Mouse-ear cress</name>
    <dbReference type="NCBI Taxonomy" id="3702"/>
    <lineage>
        <taxon>Eukaryota</taxon>
        <taxon>Viridiplantae</taxon>
        <taxon>Streptophyta</taxon>
        <taxon>Embryophyta</taxon>
        <taxon>Tracheophyta</taxon>
        <taxon>Spermatophyta</taxon>
        <taxon>Magnoliopsida</taxon>
        <taxon>eudicotyledons</taxon>
        <taxon>Gunneridae</taxon>
        <taxon>Pentapetalae</taxon>
        <taxon>rosids</taxon>
        <taxon>malvids</taxon>
        <taxon>Brassicales</taxon>
        <taxon>Brassicaceae</taxon>
        <taxon>Camelineae</taxon>
        <taxon>Arabidopsis</taxon>
    </lineage>
</organism>
<dbReference type="EMBL" id="AC005824">
    <property type="protein sequence ID" value="AAC73039.1"/>
    <property type="molecule type" value="Genomic_DNA"/>
</dbReference>
<dbReference type="EMBL" id="AC006232">
    <property type="protein sequence ID" value="AAM15176.1"/>
    <property type="molecule type" value="Genomic_DNA"/>
</dbReference>
<dbReference type="EMBL" id="CP002685">
    <property type="protein sequence ID" value="AEC08020.1"/>
    <property type="molecule type" value="Genomic_DNA"/>
</dbReference>
<dbReference type="PIR" id="G84674">
    <property type="entry name" value="G84674"/>
</dbReference>
<dbReference type="RefSeq" id="NP_180329.1">
    <property type="nucleotide sequence ID" value="NM_128320.1"/>
</dbReference>
<dbReference type="SMR" id="Q9ZUW3"/>
<dbReference type="FunCoup" id="Q9ZUW3">
    <property type="interactions" value="162"/>
</dbReference>
<dbReference type="IntAct" id="Q9ZUW3">
    <property type="interactions" value="1"/>
</dbReference>
<dbReference type="STRING" id="3702.Q9ZUW3"/>
<dbReference type="PaxDb" id="3702-AT2G27610.1"/>
<dbReference type="ProteomicsDB" id="249142"/>
<dbReference type="EnsemblPlants" id="AT2G27610.1">
    <property type="protein sequence ID" value="AT2G27610.1"/>
    <property type="gene ID" value="AT2G27610"/>
</dbReference>
<dbReference type="GeneID" id="817307"/>
<dbReference type="Gramene" id="AT2G27610.1">
    <property type="protein sequence ID" value="AT2G27610.1"/>
    <property type="gene ID" value="AT2G27610"/>
</dbReference>
<dbReference type="KEGG" id="ath:AT2G27610"/>
<dbReference type="Araport" id="AT2G27610"/>
<dbReference type="TAIR" id="AT2G27610"/>
<dbReference type="eggNOG" id="KOG4197">
    <property type="taxonomic scope" value="Eukaryota"/>
</dbReference>
<dbReference type="HOGENOM" id="CLU_002706_15_7_1"/>
<dbReference type="InParanoid" id="Q9ZUW3"/>
<dbReference type="OMA" id="QPDTNYV"/>
<dbReference type="PhylomeDB" id="Q9ZUW3"/>
<dbReference type="PRO" id="PR:Q9ZUW3"/>
<dbReference type="Proteomes" id="UP000006548">
    <property type="component" value="Chromosome 2"/>
</dbReference>
<dbReference type="ExpressionAtlas" id="Q9ZUW3">
    <property type="expression patterns" value="baseline and differential"/>
</dbReference>
<dbReference type="GO" id="GO:0003723">
    <property type="term" value="F:RNA binding"/>
    <property type="evidence" value="ECO:0007669"/>
    <property type="project" value="InterPro"/>
</dbReference>
<dbReference type="GO" id="GO:0008270">
    <property type="term" value="F:zinc ion binding"/>
    <property type="evidence" value="ECO:0007669"/>
    <property type="project" value="InterPro"/>
</dbReference>
<dbReference type="GO" id="GO:0009451">
    <property type="term" value="P:RNA modification"/>
    <property type="evidence" value="ECO:0007669"/>
    <property type="project" value="InterPro"/>
</dbReference>
<dbReference type="FunFam" id="1.25.40.10:FF:000366">
    <property type="entry name" value="Pentatricopeptide (PPR) repeat-containing protein"/>
    <property type="match status" value="1"/>
</dbReference>
<dbReference type="FunFam" id="1.25.40.10:FF:000382">
    <property type="entry name" value="Pentatricopeptide repeat-containing protein"/>
    <property type="match status" value="1"/>
</dbReference>
<dbReference type="FunFam" id="1.25.40.10:FF:000073">
    <property type="entry name" value="Pentatricopeptide repeat-containing protein chloroplastic"/>
    <property type="match status" value="1"/>
</dbReference>
<dbReference type="FunFam" id="1.25.40.10:FF:000031">
    <property type="entry name" value="Pentatricopeptide repeat-containing protein mitochondrial"/>
    <property type="match status" value="1"/>
</dbReference>
<dbReference type="FunFam" id="1.25.40.10:FF:000201">
    <property type="entry name" value="Pentatricopeptide repeat-containing protein mitochondrial"/>
    <property type="match status" value="1"/>
</dbReference>
<dbReference type="Gene3D" id="1.25.40.10">
    <property type="entry name" value="Tetratricopeptide repeat domain"/>
    <property type="match status" value="6"/>
</dbReference>
<dbReference type="InterPro" id="IPR032867">
    <property type="entry name" value="DYW_dom"/>
</dbReference>
<dbReference type="InterPro" id="IPR046848">
    <property type="entry name" value="E_motif"/>
</dbReference>
<dbReference type="InterPro" id="IPR046849">
    <property type="entry name" value="Eplus_motif"/>
</dbReference>
<dbReference type="InterPro" id="IPR002885">
    <property type="entry name" value="Pentatricopeptide_rpt"/>
</dbReference>
<dbReference type="InterPro" id="IPR046960">
    <property type="entry name" value="PPR_At4g14850-like_plant"/>
</dbReference>
<dbReference type="InterPro" id="IPR011990">
    <property type="entry name" value="TPR-like_helical_dom_sf"/>
</dbReference>
<dbReference type="NCBIfam" id="TIGR00756">
    <property type="entry name" value="PPR"/>
    <property type="match status" value="6"/>
</dbReference>
<dbReference type="PANTHER" id="PTHR47926">
    <property type="entry name" value="PENTATRICOPEPTIDE REPEAT-CONTAINING PROTEIN"/>
    <property type="match status" value="1"/>
</dbReference>
<dbReference type="PANTHER" id="PTHR47926:SF538">
    <property type="entry name" value="WHIM2 DOMAIN-CONTAINING PROTEIN"/>
    <property type="match status" value="1"/>
</dbReference>
<dbReference type="Pfam" id="PF14432">
    <property type="entry name" value="DYW_deaminase"/>
    <property type="match status" value="1"/>
</dbReference>
<dbReference type="Pfam" id="PF20431">
    <property type="entry name" value="E_motif"/>
    <property type="match status" value="1"/>
</dbReference>
<dbReference type="Pfam" id="PF20430">
    <property type="entry name" value="Eplus_motif"/>
    <property type="match status" value="1"/>
</dbReference>
<dbReference type="Pfam" id="PF01535">
    <property type="entry name" value="PPR"/>
    <property type="match status" value="6"/>
</dbReference>
<dbReference type="Pfam" id="PF13041">
    <property type="entry name" value="PPR_2"/>
    <property type="match status" value="4"/>
</dbReference>
<dbReference type="SUPFAM" id="SSF48452">
    <property type="entry name" value="TPR-like"/>
    <property type="match status" value="1"/>
</dbReference>
<dbReference type="PROSITE" id="PS51375">
    <property type="entry name" value="PPR"/>
    <property type="match status" value="16"/>
</dbReference>
<reference key="1">
    <citation type="journal article" date="1999" name="Nature">
        <title>Sequence and analysis of chromosome 2 of the plant Arabidopsis thaliana.</title>
        <authorList>
            <person name="Lin X."/>
            <person name="Kaul S."/>
            <person name="Rounsley S.D."/>
            <person name="Shea T.P."/>
            <person name="Benito M.-I."/>
            <person name="Town C.D."/>
            <person name="Fujii C.Y."/>
            <person name="Mason T.M."/>
            <person name="Bowman C.L."/>
            <person name="Barnstead M.E."/>
            <person name="Feldblyum T.V."/>
            <person name="Buell C.R."/>
            <person name="Ketchum K.A."/>
            <person name="Lee J.J."/>
            <person name="Ronning C.M."/>
            <person name="Koo H.L."/>
            <person name="Moffat K.S."/>
            <person name="Cronin L.A."/>
            <person name="Shen M."/>
            <person name="Pai G."/>
            <person name="Van Aken S."/>
            <person name="Umayam L."/>
            <person name="Tallon L.J."/>
            <person name="Gill J.E."/>
            <person name="Adams M.D."/>
            <person name="Carrera A.J."/>
            <person name="Creasy T.H."/>
            <person name="Goodman H.M."/>
            <person name="Somerville C.R."/>
            <person name="Copenhaver G.P."/>
            <person name="Preuss D."/>
            <person name="Nierman W.C."/>
            <person name="White O."/>
            <person name="Eisen J.A."/>
            <person name="Salzberg S.L."/>
            <person name="Fraser C.M."/>
            <person name="Venter J.C."/>
        </authorList>
    </citation>
    <scope>NUCLEOTIDE SEQUENCE [LARGE SCALE GENOMIC DNA]</scope>
    <source>
        <strain>cv. Columbia</strain>
    </source>
</reference>
<reference key="2">
    <citation type="journal article" date="2017" name="Plant J.">
        <title>Araport11: a complete reannotation of the Arabidopsis thaliana reference genome.</title>
        <authorList>
            <person name="Cheng C.Y."/>
            <person name="Krishnakumar V."/>
            <person name="Chan A.P."/>
            <person name="Thibaud-Nissen F."/>
            <person name="Schobel S."/>
            <person name="Town C.D."/>
        </authorList>
    </citation>
    <scope>GENOME REANNOTATION</scope>
    <source>
        <strain>cv. Columbia</strain>
    </source>
</reference>
<reference key="3">
    <citation type="journal article" date="2000" name="Plant Mol. Biol.">
        <title>In Arabidopsis thaliana, 1% of the genome codes for a novel protein family unique to plants.</title>
        <authorList>
            <person name="Aubourg S."/>
            <person name="Boudet N."/>
            <person name="Kreis M."/>
            <person name="Lecharny A."/>
        </authorList>
    </citation>
    <scope>GENE FAMILY</scope>
</reference>
<reference key="4">
    <citation type="journal article" date="2004" name="Plant Cell">
        <title>Genome-wide analysis of Arabidopsis pentatricopeptide repeat proteins reveals their essential role in organelle biogenesis.</title>
        <authorList>
            <person name="Lurin C."/>
            <person name="Andres C."/>
            <person name="Aubourg S."/>
            <person name="Bellaoui M."/>
            <person name="Bitton F."/>
            <person name="Bruyere C."/>
            <person name="Caboche M."/>
            <person name="Debast C."/>
            <person name="Gualberto J."/>
            <person name="Hoffmann B."/>
            <person name="Lecharny A."/>
            <person name="Le Ret M."/>
            <person name="Martin-Magniette M.-L."/>
            <person name="Mireau H."/>
            <person name="Peeters N."/>
            <person name="Renou J.-P."/>
            <person name="Szurek B."/>
            <person name="Taconnat L."/>
            <person name="Small I."/>
        </authorList>
    </citation>
    <scope>GENE FAMILY</scope>
</reference>
<sequence>MRFTTTIWRPPSLENFKPKFRIYANGVAQVRIYCFGTVSSSRLYNAHNLFDKSPGRDRESYISLLFGFSRDGRTQEAKRLFLNIHRLGMEMDCSIFSSVLKVSATLCDELFGRQLHCQCIKFGFLDDVSVGTSLVDTYMKGSNFKDGRKVFDEMKERNVVTWTTLISGYARNSMNDEVLTLFMRMQNEGTQPNSFTFAAALGVLAEEGVGGRGLQVHTVVVKNGLDKTIPVSNSLINLYLKCGNVRKARILFDKTEVKSVVTWNSMISGYAANGLDLEALGMFYSMRLNYVRLSESSFASVIKLCANLKELRFTEQLHCSVVKYGFLFDQNIRTALMVAYSKCTAMLDALRLFKEIGCVGNVVSWTAMISGFLQNDGKEEAVDLFSEMKRKGVRPNEFTYSVILTALPVISPSEVHAQVVKTNYERSSTVGTALLDAYVKLGKVEEAAKVFSGIDDKDIVAWSAMLAGYAQTGETEAAIKMFGELTKGGIKPNEFTFSSILNVCAATNASMGQGKQFHGFAIKSRLDSSLCVSSALLTMYAKKGNIESAEEVFKRQREKDLVSWNSMISGYAQHGQAMKALDVFKEMKKRKVKMDGVTFIGVFAACTHAGLVEEGEKYFDIMVRDCKIAPTKEHNSCMVDLYSRAGQLEKAMKVIENMPNPAGSTIWRTILAACRVHKKTELGRLAAEKIIAMKPEDSAAYVLLSNMYAESGDWQERAKVRKLMNERNVKKEPGYSWIEVKNKTYSFLAGDRSHPLKDQIYMKLEDLSTRLKDLGYEPDTSYVLQDIDDEHKEAVLAQHSERLAIAFGLIATPKGSPLLIIKNLRVCGDCHLVIKLIAKIEEREIVVRDSNRFHHFSSDGVCSCGDFW</sequence>
<keyword id="KW-1185">Reference proteome</keyword>
<keyword id="KW-0677">Repeat</keyword>
<feature type="chain" id="PRO_0000356031" description="Pentatricopeptide repeat-containing protein At2g27610">
    <location>
        <begin position="1"/>
        <end position="868"/>
    </location>
</feature>
<feature type="repeat" description="PPR 1">
    <location>
        <begin position="57"/>
        <end position="91"/>
    </location>
</feature>
<feature type="repeat" description="PPR 2">
    <location>
        <begin position="92"/>
        <end position="126"/>
    </location>
</feature>
<feature type="repeat" description="PPR 3">
    <location>
        <begin position="127"/>
        <end position="157"/>
    </location>
</feature>
<feature type="repeat" description="PPR 4">
    <location>
        <begin position="158"/>
        <end position="192"/>
    </location>
</feature>
<feature type="repeat" description="PPR 5">
    <location>
        <begin position="193"/>
        <end position="227"/>
    </location>
</feature>
<feature type="repeat" description="PPR 6">
    <location>
        <begin position="228"/>
        <end position="258"/>
    </location>
</feature>
<feature type="repeat" description="PPR 7">
    <location>
        <begin position="259"/>
        <end position="293"/>
    </location>
</feature>
<feature type="repeat" description="PPR 8">
    <location>
        <begin position="294"/>
        <end position="328"/>
    </location>
</feature>
<feature type="repeat" description="PPR 9">
    <location>
        <begin position="329"/>
        <end position="359"/>
    </location>
</feature>
<feature type="repeat" description="PPR 10">
    <location>
        <begin position="361"/>
        <end position="395"/>
    </location>
</feature>
<feature type="repeat" description="PPR 11">
    <location>
        <begin position="396"/>
        <end position="426"/>
    </location>
</feature>
<feature type="repeat" description="PPR 12">
    <location>
        <begin position="427"/>
        <end position="457"/>
    </location>
</feature>
<feature type="repeat" description="PPR 13">
    <location>
        <begin position="458"/>
        <end position="492"/>
    </location>
</feature>
<feature type="repeat" description="PPR 14">
    <location>
        <begin position="493"/>
        <end position="528"/>
    </location>
</feature>
<feature type="repeat" description="PPR 15">
    <location>
        <begin position="529"/>
        <end position="559"/>
    </location>
</feature>
<feature type="repeat" description="PPR 16">
    <location>
        <begin position="560"/>
        <end position="594"/>
    </location>
</feature>
<feature type="repeat" description="PPR 17">
    <location>
        <begin position="595"/>
        <end position="625"/>
    </location>
</feature>
<feature type="repeat" description="PPR 18">
    <location>
        <begin position="631"/>
        <end position="661"/>
    </location>
</feature>
<feature type="region of interest" description="Type E motif">
    <location>
        <begin position="666"/>
        <end position="741"/>
    </location>
</feature>
<feature type="region of interest" description="Type E(+) motif">
    <location>
        <begin position="742"/>
        <end position="772"/>
    </location>
</feature>
<feature type="region of interest" description="Type DYW motif">
    <location>
        <begin position="773"/>
        <end position="868"/>
    </location>
</feature>
<evidence type="ECO:0000305" key="1"/>
<comment type="similarity">
    <text evidence="1">Belongs to the PPR family. PCMP-H subfamily.</text>
</comment>
<comment type="online information" name="Pentatricopeptide repeat proteins">
    <link uri="https://ppr.plantenergy.uwa.edu.au"/>
</comment>
<name>PP172_ARATH</name>
<gene>
    <name type="primary">PCMP-H60</name>
    <name type="ordered locus">At2g27610</name>
    <name type="ORF">F10A12.28</name>
    <name type="ORF">F15K20.29</name>
</gene>
<proteinExistence type="evidence at transcript level"/>
<accession>Q9ZUW3</accession>
<accession>Q8S8I6</accession>
<protein>
    <recommendedName>
        <fullName>Pentatricopeptide repeat-containing protein At2g27610</fullName>
    </recommendedName>
</protein>